<sequence length="461" mass="52250">MSQHHILPQHQRADLNRSICDYVQRCGAEESLVVGLRQLFGLSAEECDATRNGRDPDLLLKKWNSIIRLHRKILDLEQKCQQLTEELEAVPTEAYGKAGRGVSHVLWTPRSNPTFQLDVGASVTDIKLHPSLPIAFLATDQGKVVAYDLFNRSMPLHSTQAHMKGVTSLAVMEAENGSLLISTTSKDLQCKIWSFTDNAAFQLLRTLSSHEHIVSQSCFLRSGSDLLLATCSRDLTVKVWDTKSGWCIKSFQPHNQWVRTLELHGDYVITGSNDATIRLSHWPSGNGLSMAVMHEFPIERVLIIPMRANTAQKTEADDDQVELEYRKYDPDYSPLGFKYCISCSRDNLIVLWKIPLPKFIPHRPPQPNLLQTNFEKVHVFKGHTSWVRDIKVRGRHLFSCSDDRSIRCWDLVTGQCLKVWPEASHGFINCLSVDSDVSNDKLLRELFLSGSIDGKCNVFMR</sequence>
<reference key="1">
    <citation type="journal article" date="2004" name="Science">
        <title>The Ashbya gossypii genome as a tool for mapping the ancient Saccharomyces cerevisiae genome.</title>
        <authorList>
            <person name="Dietrich F.S."/>
            <person name="Voegeli S."/>
            <person name="Brachat S."/>
            <person name="Lerch A."/>
            <person name="Gates K."/>
            <person name="Steiner S."/>
            <person name="Mohr C."/>
            <person name="Poehlmann R."/>
            <person name="Luedi P."/>
            <person name="Choi S."/>
            <person name="Wing R.A."/>
            <person name="Flavier A."/>
            <person name="Gaffney T.D."/>
            <person name="Philippsen P."/>
        </authorList>
    </citation>
    <scope>NUCLEOTIDE SEQUENCE [LARGE SCALE GENOMIC DNA]</scope>
    <source>
        <strain>ATCC 10895 / CBS 109.51 / FGSC 9923 / NRRL Y-1056</strain>
    </source>
</reference>
<reference key="2">
    <citation type="journal article" date="2013" name="G3 (Bethesda)">
        <title>Genomes of Ashbya fungi isolated from insects reveal four mating-type loci, numerous translocations, lack of transposons, and distinct gene duplications.</title>
        <authorList>
            <person name="Dietrich F.S."/>
            <person name="Voegeli S."/>
            <person name="Kuo S."/>
            <person name="Philippsen P."/>
        </authorList>
    </citation>
    <scope>GENOME REANNOTATION</scope>
    <source>
        <strain>ATCC 10895 / CBS 109.51 / FGSC 9923 / NRRL Y-1056</strain>
    </source>
</reference>
<feature type="chain" id="PRO_0000405065" description="Nuclear distribution protein PAC1">
    <location>
        <begin position="1"/>
        <end position="461"/>
    </location>
</feature>
<feature type="repeat" description="WD 1">
    <location>
        <begin position="118"/>
        <end position="157"/>
    </location>
</feature>
<feature type="repeat" description="WD 2">
    <location>
        <begin position="161"/>
        <end position="203"/>
    </location>
</feature>
<feature type="repeat" description="WD 3">
    <location>
        <begin position="209"/>
        <end position="252"/>
    </location>
</feature>
<feature type="repeat" description="WD 4">
    <location>
        <begin position="254"/>
        <end position="292"/>
    </location>
</feature>
<feature type="repeat" description="WD 5">
    <location>
        <begin position="318"/>
        <end position="362"/>
    </location>
</feature>
<feature type="repeat" description="WD 6">
    <location>
        <begin position="382"/>
        <end position="421"/>
    </location>
</feature>
<feature type="repeat" description="WD 7">
    <location>
        <begin position="423"/>
        <end position="461"/>
    </location>
</feature>
<feature type="coiled-coil region" evidence="1">
    <location>
        <begin position="64"/>
        <end position="93"/>
    </location>
</feature>
<proteinExistence type="inferred from homology"/>
<comment type="function">
    <text evidence="1">Positively regulates the activity of the minus-end directed microtubule motor protein dynein. Plays a central role in positioning the mitotic spindle at the bud neck during cell division. Targets cytoplasmic dynein to microtubule plus ends, thereby promoting dynein-mediated microtubule sliding along the bud cortex and consequently the movement of the mitotic spindle to the bud neck.</text>
</comment>
<comment type="subunit">
    <text evidence="1">Self-associates. Interacts with NDL1 and dynein.</text>
</comment>
<comment type="subcellular location">
    <subcellularLocation>
        <location evidence="1">Cytoplasm</location>
        <location evidence="1">Cytoskeleton</location>
    </subcellularLocation>
    <subcellularLocation>
        <location evidence="1">Cytoplasm</location>
        <location evidence="1">Cytoskeleton</location>
        <location evidence="1">Spindle pole</location>
    </subcellularLocation>
    <text evidence="1">Localizes to the plus ends of microtubules and the mitotic spindle poles.</text>
</comment>
<comment type="similarity">
    <text evidence="1">Belongs to the WD repeat LIS1/nudF family.</text>
</comment>
<evidence type="ECO:0000255" key="1">
    <source>
        <dbReference type="HAMAP-Rule" id="MF_03141"/>
    </source>
</evidence>
<gene>
    <name evidence="1" type="primary">PAC1</name>
    <name evidence="1" type="synonym">LIS1</name>
    <name type="ordered locus">ADR176W</name>
</gene>
<organism>
    <name type="scientific">Eremothecium gossypii (strain ATCC 10895 / CBS 109.51 / FGSC 9923 / NRRL Y-1056)</name>
    <name type="common">Yeast</name>
    <name type="synonym">Ashbya gossypii</name>
    <dbReference type="NCBI Taxonomy" id="284811"/>
    <lineage>
        <taxon>Eukaryota</taxon>
        <taxon>Fungi</taxon>
        <taxon>Dikarya</taxon>
        <taxon>Ascomycota</taxon>
        <taxon>Saccharomycotina</taxon>
        <taxon>Saccharomycetes</taxon>
        <taxon>Saccharomycetales</taxon>
        <taxon>Saccharomycetaceae</taxon>
        <taxon>Eremothecium</taxon>
    </lineage>
</organism>
<protein>
    <recommendedName>
        <fullName evidence="1">Nuclear distribution protein PAC1</fullName>
    </recommendedName>
    <alternativeName>
        <fullName evidence="1">Lissencephaly-1 homolog</fullName>
        <shortName evidence="1">LIS-1</shortName>
    </alternativeName>
    <alternativeName>
        <fullName evidence="1">nudF homolog</fullName>
    </alternativeName>
</protein>
<dbReference type="EMBL" id="AE016817">
    <property type="protein sequence ID" value="AAS52096.1"/>
    <property type="molecule type" value="Genomic_DNA"/>
</dbReference>
<dbReference type="RefSeq" id="NP_984272.1">
    <property type="nucleotide sequence ID" value="NM_209625.2"/>
</dbReference>
<dbReference type="SMR" id="Q759U7"/>
<dbReference type="FunCoup" id="Q759U7">
    <property type="interactions" value="82"/>
</dbReference>
<dbReference type="STRING" id="284811.Q759U7"/>
<dbReference type="EnsemblFungi" id="AAS52096">
    <property type="protein sequence ID" value="AAS52096"/>
    <property type="gene ID" value="AGOS_ADR176W"/>
</dbReference>
<dbReference type="GeneID" id="4620434"/>
<dbReference type="KEGG" id="ago:AGOS_ADR176W"/>
<dbReference type="eggNOG" id="KOG0295">
    <property type="taxonomic scope" value="Eukaryota"/>
</dbReference>
<dbReference type="HOGENOM" id="CLU_000288_57_15_1"/>
<dbReference type="InParanoid" id="Q759U7"/>
<dbReference type="OMA" id="RGTCLMT"/>
<dbReference type="OrthoDB" id="10264588at2759"/>
<dbReference type="Proteomes" id="UP000000591">
    <property type="component" value="Chromosome IV"/>
</dbReference>
<dbReference type="GO" id="GO:0005881">
    <property type="term" value="C:cytoplasmic microtubule"/>
    <property type="evidence" value="ECO:0000318"/>
    <property type="project" value="GO_Central"/>
</dbReference>
<dbReference type="GO" id="GO:0000776">
    <property type="term" value="C:kinetochore"/>
    <property type="evidence" value="ECO:0000318"/>
    <property type="project" value="GO_Central"/>
</dbReference>
<dbReference type="GO" id="GO:0005875">
    <property type="term" value="C:microtubule associated complex"/>
    <property type="evidence" value="ECO:0000318"/>
    <property type="project" value="GO_Central"/>
</dbReference>
<dbReference type="GO" id="GO:0005635">
    <property type="term" value="C:nuclear envelope"/>
    <property type="evidence" value="ECO:0000318"/>
    <property type="project" value="GO_Central"/>
</dbReference>
<dbReference type="GO" id="GO:0000922">
    <property type="term" value="C:spindle pole"/>
    <property type="evidence" value="ECO:0007669"/>
    <property type="project" value="UniProtKB-SubCell"/>
</dbReference>
<dbReference type="GO" id="GO:1990234">
    <property type="term" value="C:transferase complex"/>
    <property type="evidence" value="ECO:0007669"/>
    <property type="project" value="UniProtKB-ARBA"/>
</dbReference>
<dbReference type="GO" id="GO:0070840">
    <property type="term" value="F:dynein complex binding"/>
    <property type="evidence" value="ECO:0000318"/>
    <property type="project" value="GO_Central"/>
</dbReference>
<dbReference type="GO" id="GO:0042802">
    <property type="term" value="F:identical protein binding"/>
    <property type="evidence" value="ECO:0007669"/>
    <property type="project" value="EnsemblFungi"/>
</dbReference>
<dbReference type="GO" id="GO:0051010">
    <property type="term" value="F:microtubule plus-end binding"/>
    <property type="evidence" value="ECO:0000318"/>
    <property type="project" value="GO_Central"/>
</dbReference>
<dbReference type="GO" id="GO:0051301">
    <property type="term" value="P:cell division"/>
    <property type="evidence" value="ECO:0007669"/>
    <property type="project" value="UniProtKB-KW"/>
</dbReference>
<dbReference type="GO" id="GO:0000132">
    <property type="term" value="P:establishment of mitotic spindle orientation"/>
    <property type="evidence" value="ECO:0000318"/>
    <property type="project" value="GO_Central"/>
</dbReference>
<dbReference type="GO" id="GO:0031023">
    <property type="term" value="P:microtubule organizing center organization"/>
    <property type="evidence" value="ECO:0000318"/>
    <property type="project" value="GO_Central"/>
</dbReference>
<dbReference type="GO" id="GO:0051012">
    <property type="term" value="P:microtubule sliding"/>
    <property type="evidence" value="ECO:0007669"/>
    <property type="project" value="UniProtKB-UniRule"/>
</dbReference>
<dbReference type="GO" id="GO:0007097">
    <property type="term" value="P:nuclear migration"/>
    <property type="evidence" value="ECO:0000318"/>
    <property type="project" value="GO_Central"/>
</dbReference>
<dbReference type="GO" id="GO:0030473">
    <property type="term" value="P:nuclear migration along microtubule"/>
    <property type="evidence" value="ECO:0007669"/>
    <property type="project" value="EnsemblFungi"/>
</dbReference>
<dbReference type="GO" id="GO:0047496">
    <property type="term" value="P:vesicle transport along microtubule"/>
    <property type="evidence" value="ECO:0000318"/>
    <property type="project" value="GO_Central"/>
</dbReference>
<dbReference type="Gene3D" id="1.20.960.30">
    <property type="match status" value="1"/>
</dbReference>
<dbReference type="Gene3D" id="2.130.10.10">
    <property type="entry name" value="YVTN repeat-like/Quinoprotein amine dehydrogenase"/>
    <property type="match status" value="1"/>
</dbReference>
<dbReference type="HAMAP" id="MF_03141">
    <property type="entry name" value="lis1"/>
    <property type="match status" value="1"/>
</dbReference>
<dbReference type="InterPro" id="IPR017252">
    <property type="entry name" value="Dynein_regulator_LIS1"/>
</dbReference>
<dbReference type="InterPro" id="IPR037190">
    <property type="entry name" value="LIS1_N"/>
</dbReference>
<dbReference type="InterPro" id="IPR015943">
    <property type="entry name" value="WD40/YVTN_repeat-like_dom_sf"/>
</dbReference>
<dbReference type="InterPro" id="IPR019775">
    <property type="entry name" value="WD40_repeat_CS"/>
</dbReference>
<dbReference type="InterPro" id="IPR036322">
    <property type="entry name" value="WD40_repeat_dom_sf"/>
</dbReference>
<dbReference type="InterPro" id="IPR001680">
    <property type="entry name" value="WD40_rpt"/>
</dbReference>
<dbReference type="PANTHER" id="PTHR22847:SF637">
    <property type="entry name" value="WD REPEAT DOMAIN 5B"/>
    <property type="match status" value="1"/>
</dbReference>
<dbReference type="PANTHER" id="PTHR22847">
    <property type="entry name" value="WD40 REPEAT PROTEIN"/>
    <property type="match status" value="1"/>
</dbReference>
<dbReference type="Pfam" id="PF00400">
    <property type="entry name" value="WD40"/>
    <property type="match status" value="4"/>
</dbReference>
<dbReference type="PIRSF" id="PIRSF037647">
    <property type="entry name" value="Dynein_regulator_Lis1"/>
    <property type="match status" value="1"/>
</dbReference>
<dbReference type="SMART" id="SM00320">
    <property type="entry name" value="WD40"/>
    <property type="match status" value="7"/>
</dbReference>
<dbReference type="SUPFAM" id="SSF109925">
    <property type="entry name" value="Lissencephaly-1 protein (Lis-1, PAF-AH alpha) N-terminal domain"/>
    <property type="match status" value="1"/>
</dbReference>
<dbReference type="SUPFAM" id="SSF50978">
    <property type="entry name" value="WD40 repeat-like"/>
    <property type="match status" value="1"/>
</dbReference>
<dbReference type="PROSITE" id="PS00678">
    <property type="entry name" value="WD_REPEATS_1"/>
    <property type="match status" value="1"/>
</dbReference>
<dbReference type="PROSITE" id="PS50082">
    <property type="entry name" value="WD_REPEATS_2"/>
    <property type="match status" value="2"/>
</dbReference>
<dbReference type="PROSITE" id="PS50294">
    <property type="entry name" value="WD_REPEATS_REGION"/>
    <property type="match status" value="2"/>
</dbReference>
<name>LIS1_EREGS</name>
<accession>Q759U7</accession>
<keyword id="KW-0131">Cell cycle</keyword>
<keyword id="KW-0132">Cell division</keyword>
<keyword id="KW-0175">Coiled coil</keyword>
<keyword id="KW-0963">Cytoplasm</keyword>
<keyword id="KW-0206">Cytoskeleton</keyword>
<keyword id="KW-0493">Microtubule</keyword>
<keyword id="KW-0498">Mitosis</keyword>
<keyword id="KW-1185">Reference proteome</keyword>
<keyword id="KW-0677">Repeat</keyword>
<keyword id="KW-0813">Transport</keyword>
<keyword id="KW-0853">WD repeat</keyword>